<protein>
    <recommendedName>
        <fullName evidence="3">Protein S40-5</fullName>
        <shortName evidence="3">AtS40-5</shortName>
    </recommendedName>
</protein>
<dbReference type="EMBL" id="AC007296">
    <property type="protein sequence ID" value="AAD30253.1"/>
    <property type="molecule type" value="Genomic_DNA"/>
</dbReference>
<dbReference type="EMBL" id="CP002684">
    <property type="protein sequence ID" value="AEE28772.1"/>
    <property type="molecule type" value="Genomic_DNA"/>
</dbReference>
<dbReference type="EMBL" id="AF348581">
    <property type="protein sequence ID" value="AAK15552.1"/>
    <property type="molecule type" value="mRNA"/>
</dbReference>
<dbReference type="EMBL" id="BT003115">
    <property type="protein sequence ID" value="AAO24547.1"/>
    <property type="molecule type" value="mRNA"/>
</dbReference>
<dbReference type="EMBL" id="AK227681">
    <property type="protein sequence ID" value="BAE99668.1"/>
    <property type="molecule type" value="mRNA"/>
</dbReference>
<dbReference type="PIR" id="F86250">
    <property type="entry name" value="F86250"/>
</dbReference>
<dbReference type="RefSeq" id="NP_172635.1">
    <property type="nucleotide sequence ID" value="NM_101042.4"/>
</dbReference>
<dbReference type="FunCoup" id="Q9SAA7">
    <property type="interactions" value="37"/>
</dbReference>
<dbReference type="iPTMnet" id="Q9SAA7"/>
<dbReference type="PaxDb" id="3702-AT1G11700.1"/>
<dbReference type="ProteomicsDB" id="193306"/>
<dbReference type="EnsemblPlants" id="AT1G11700.1">
    <property type="protein sequence ID" value="AT1G11700.1"/>
    <property type="gene ID" value="AT1G11700"/>
</dbReference>
<dbReference type="GeneID" id="837714"/>
<dbReference type="Gramene" id="AT1G11700.1">
    <property type="protein sequence ID" value="AT1G11700.1"/>
    <property type="gene ID" value="AT1G11700"/>
</dbReference>
<dbReference type="KEGG" id="ath:AT1G11700"/>
<dbReference type="Araport" id="AT1G11700"/>
<dbReference type="TAIR" id="AT1G11700"/>
<dbReference type="eggNOG" id="ENOG502RXVW">
    <property type="taxonomic scope" value="Eukaryota"/>
</dbReference>
<dbReference type="HOGENOM" id="CLU_088831_0_0_1"/>
<dbReference type="InParanoid" id="Q9SAA7"/>
<dbReference type="OMA" id="LESHGAW"/>
<dbReference type="PRO" id="PR:Q9SAA7"/>
<dbReference type="Proteomes" id="UP000006548">
    <property type="component" value="Chromosome 1"/>
</dbReference>
<dbReference type="ExpressionAtlas" id="Q9SAA7">
    <property type="expression patterns" value="baseline and differential"/>
</dbReference>
<dbReference type="GO" id="GO:0005737">
    <property type="term" value="C:cytoplasm"/>
    <property type="evidence" value="ECO:0000314"/>
    <property type="project" value="UniProtKB"/>
</dbReference>
<dbReference type="GO" id="GO:0010150">
    <property type="term" value="P:leaf senescence"/>
    <property type="evidence" value="ECO:0000270"/>
    <property type="project" value="UniProtKB"/>
</dbReference>
<dbReference type="GO" id="GO:0009737">
    <property type="term" value="P:response to abscisic acid"/>
    <property type="evidence" value="ECO:0000270"/>
    <property type="project" value="UniProtKB"/>
</dbReference>
<dbReference type="GO" id="GO:0009646">
    <property type="term" value="P:response to absence of light"/>
    <property type="evidence" value="ECO:0000270"/>
    <property type="project" value="UniProtKB"/>
</dbReference>
<dbReference type="GO" id="GO:0009751">
    <property type="term" value="P:response to salicylic acid"/>
    <property type="evidence" value="ECO:0000270"/>
    <property type="project" value="UniProtKB"/>
</dbReference>
<dbReference type="InterPro" id="IPR007608">
    <property type="entry name" value="Senescence_reg_S40"/>
</dbReference>
<dbReference type="PANTHER" id="PTHR46525">
    <property type="entry name" value="EMB|CAB72159.1"/>
    <property type="match status" value="1"/>
</dbReference>
<dbReference type="PANTHER" id="PTHR46525:SF18">
    <property type="entry name" value="SENESCENCE REGULATOR S40"/>
    <property type="match status" value="1"/>
</dbReference>
<dbReference type="Pfam" id="PF04520">
    <property type="entry name" value="Senescence_reg"/>
    <property type="match status" value="1"/>
</dbReference>
<evidence type="ECO:0000256" key="1">
    <source>
        <dbReference type="SAM" id="MobiDB-lite"/>
    </source>
</evidence>
<evidence type="ECO:0000269" key="2">
    <source>
    </source>
</evidence>
<evidence type="ECO:0000303" key="3">
    <source>
    </source>
</evidence>
<evidence type="ECO:0000305" key="4"/>
<evidence type="ECO:0000312" key="5">
    <source>
        <dbReference type="Araport" id="AT1G11700"/>
    </source>
</evidence>
<evidence type="ECO:0000312" key="6">
    <source>
        <dbReference type="EMBL" id="AAD30253.1"/>
    </source>
</evidence>
<organism>
    <name type="scientific">Arabidopsis thaliana</name>
    <name type="common">Mouse-ear cress</name>
    <dbReference type="NCBI Taxonomy" id="3702"/>
    <lineage>
        <taxon>Eukaryota</taxon>
        <taxon>Viridiplantae</taxon>
        <taxon>Streptophyta</taxon>
        <taxon>Embryophyta</taxon>
        <taxon>Tracheophyta</taxon>
        <taxon>Spermatophyta</taxon>
        <taxon>Magnoliopsida</taxon>
        <taxon>eudicotyledons</taxon>
        <taxon>Gunneridae</taxon>
        <taxon>Pentapetalae</taxon>
        <taxon>rosids</taxon>
        <taxon>malvids</taxon>
        <taxon>Brassicales</taxon>
        <taxon>Brassicaceae</taxon>
        <taxon>Camelineae</taxon>
        <taxon>Arabidopsis</taxon>
    </lineage>
</organism>
<sequence length="201" mass="21779">MARGRKLTMSQSERYLGSSYSYGDSNGNSATDESELTEEDIWSHAVDHSPEMLESHGAWNTRDAVVRNGRVGGGLSLAFEDASSSPRIVHQIRGGGEGGGGGGGGGRVERQLASSAPVNVPDWSKIYRVNSVESIHESDEEEEEDSGMMMPPHEYLAKSQQRRSRKSGGGGSVFEGVGRTLKGRELRRVRDAIWSQTGFYG</sequence>
<feature type="chain" id="PRO_0000457293" description="Protein S40-5">
    <location>
        <begin position="1"/>
        <end position="201"/>
    </location>
</feature>
<feature type="region of interest" description="Disordered" evidence="1">
    <location>
        <begin position="1"/>
        <end position="39"/>
    </location>
</feature>
<feature type="region of interest" description="Disordered" evidence="1">
    <location>
        <begin position="134"/>
        <end position="178"/>
    </location>
</feature>
<feature type="compositionally biased region" description="Low complexity" evidence="1">
    <location>
        <begin position="17"/>
        <end position="29"/>
    </location>
</feature>
<name>S405_ARATH</name>
<accession>Q9SAA7</accession>
<proteinExistence type="evidence at protein level"/>
<reference key="1">
    <citation type="journal article" date="2000" name="Nature">
        <title>Sequence and analysis of chromosome 1 of the plant Arabidopsis thaliana.</title>
        <authorList>
            <person name="Theologis A."/>
            <person name="Ecker J.R."/>
            <person name="Palm C.J."/>
            <person name="Federspiel N.A."/>
            <person name="Kaul S."/>
            <person name="White O."/>
            <person name="Alonso J."/>
            <person name="Altafi H."/>
            <person name="Araujo R."/>
            <person name="Bowman C.L."/>
            <person name="Brooks S.Y."/>
            <person name="Buehler E."/>
            <person name="Chan A."/>
            <person name="Chao Q."/>
            <person name="Chen H."/>
            <person name="Cheuk R.F."/>
            <person name="Chin C.W."/>
            <person name="Chung M.K."/>
            <person name="Conn L."/>
            <person name="Conway A.B."/>
            <person name="Conway A.R."/>
            <person name="Creasy T.H."/>
            <person name="Dewar K."/>
            <person name="Dunn P."/>
            <person name="Etgu P."/>
            <person name="Feldblyum T.V."/>
            <person name="Feng J.-D."/>
            <person name="Fong B."/>
            <person name="Fujii C.Y."/>
            <person name="Gill J.E."/>
            <person name="Goldsmith A.D."/>
            <person name="Haas B."/>
            <person name="Hansen N.F."/>
            <person name="Hughes B."/>
            <person name="Huizar L."/>
            <person name="Hunter J.L."/>
            <person name="Jenkins J."/>
            <person name="Johnson-Hopson C."/>
            <person name="Khan S."/>
            <person name="Khaykin E."/>
            <person name="Kim C.J."/>
            <person name="Koo H.L."/>
            <person name="Kremenetskaia I."/>
            <person name="Kurtz D.B."/>
            <person name="Kwan A."/>
            <person name="Lam B."/>
            <person name="Langin-Hooper S."/>
            <person name="Lee A."/>
            <person name="Lee J.M."/>
            <person name="Lenz C.A."/>
            <person name="Li J.H."/>
            <person name="Li Y.-P."/>
            <person name="Lin X."/>
            <person name="Liu S.X."/>
            <person name="Liu Z.A."/>
            <person name="Luros J.S."/>
            <person name="Maiti R."/>
            <person name="Marziali A."/>
            <person name="Militscher J."/>
            <person name="Miranda M."/>
            <person name="Nguyen M."/>
            <person name="Nierman W.C."/>
            <person name="Osborne B.I."/>
            <person name="Pai G."/>
            <person name="Peterson J."/>
            <person name="Pham P.K."/>
            <person name="Rizzo M."/>
            <person name="Rooney T."/>
            <person name="Rowley D."/>
            <person name="Sakano H."/>
            <person name="Salzberg S.L."/>
            <person name="Schwartz J.R."/>
            <person name="Shinn P."/>
            <person name="Southwick A.M."/>
            <person name="Sun H."/>
            <person name="Tallon L.J."/>
            <person name="Tambunga G."/>
            <person name="Toriumi M.J."/>
            <person name="Town C.D."/>
            <person name="Utterback T."/>
            <person name="Van Aken S."/>
            <person name="Vaysberg M."/>
            <person name="Vysotskaia V.S."/>
            <person name="Walker M."/>
            <person name="Wu D."/>
            <person name="Yu G."/>
            <person name="Fraser C.M."/>
            <person name="Venter J.C."/>
            <person name="Davis R.W."/>
        </authorList>
    </citation>
    <scope>NUCLEOTIDE SEQUENCE [LARGE SCALE GENOMIC DNA]</scope>
    <source>
        <strain>cv. Columbia</strain>
    </source>
</reference>
<reference key="2">
    <citation type="journal article" date="2017" name="Plant J.">
        <title>Araport11: a complete reannotation of the Arabidopsis thaliana reference genome.</title>
        <authorList>
            <person name="Cheng C.Y."/>
            <person name="Krishnakumar V."/>
            <person name="Chan A.P."/>
            <person name="Thibaud-Nissen F."/>
            <person name="Schobel S."/>
            <person name="Town C.D."/>
        </authorList>
    </citation>
    <scope>GENOME REANNOTATION</scope>
    <source>
        <strain>cv. Columbia</strain>
    </source>
</reference>
<reference key="3">
    <citation type="journal article" date="2003" name="Science">
        <title>Empirical analysis of transcriptional activity in the Arabidopsis genome.</title>
        <authorList>
            <person name="Yamada K."/>
            <person name="Lim J."/>
            <person name="Dale J.M."/>
            <person name="Chen H."/>
            <person name="Shinn P."/>
            <person name="Palm C.J."/>
            <person name="Southwick A.M."/>
            <person name="Wu H.C."/>
            <person name="Kim C.J."/>
            <person name="Nguyen M."/>
            <person name="Pham P.K."/>
            <person name="Cheuk R.F."/>
            <person name="Karlin-Newmann G."/>
            <person name="Liu S.X."/>
            <person name="Lam B."/>
            <person name="Sakano H."/>
            <person name="Wu T."/>
            <person name="Yu G."/>
            <person name="Miranda M."/>
            <person name="Quach H.L."/>
            <person name="Tripp M."/>
            <person name="Chang C.H."/>
            <person name="Lee J.M."/>
            <person name="Toriumi M.J."/>
            <person name="Chan M.M."/>
            <person name="Tang C.C."/>
            <person name="Onodera C.S."/>
            <person name="Deng J.M."/>
            <person name="Akiyama K."/>
            <person name="Ansari Y."/>
            <person name="Arakawa T."/>
            <person name="Banh J."/>
            <person name="Banno F."/>
            <person name="Bowser L."/>
            <person name="Brooks S.Y."/>
            <person name="Carninci P."/>
            <person name="Chao Q."/>
            <person name="Choy N."/>
            <person name="Enju A."/>
            <person name="Goldsmith A.D."/>
            <person name="Gurjal M."/>
            <person name="Hansen N.F."/>
            <person name="Hayashizaki Y."/>
            <person name="Johnson-Hopson C."/>
            <person name="Hsuan V.W."/>
            <person name="Iida K."/>
            <person name="Karnes M."/>
            <person name="Khan S."/>
            <person name="Koesema E."/>
            <person name="Ishida J."/>
            <person name="Jiang P.X."/>
            <person name="Jones T."/>
            <person name="Kawai J."/>
            <person name="Kamiya A."/>
            <person name="Meyers C."/>
            <person name="Nakajima M."/>
            <person name="Narusaka M."/>
            <person name="Seki M."/>
            <person name="Sakurai T."/>
            <person name="Satou M."/>
            <person name="Tamse R."/>
            <person name="Vaysberg M."/>
            <person name="Wallender E.K."/>
            <person name="Wong C."/>
            <person name="Yamamura Y."/>
            <person name="Yuan S."/>
            <person name="Shinozaki K."/>
            <person name="Davis R.W."/>
            <person name="Theologis A."/>
            <person name="Ecker J.R."/>
        </authorList>
    </citation>
    <scope>NUCLEOTIDE SEQUENCE [LARGE SCALE MRNA]</scope>
    <source>
        <strain>cv. Columbia</strain>
    </source>
</reference>
<reference key="4">
    <citation type="submission" date="2006-07" db="EMBL/GenBank/DDBJ databases">
        <title>Large-scale analysis of RIKEN Arabidopsis full-length (RAFL) cDNAs.</title>
        <authorList>
            <person name="Totoki Y."/>
            <person name="Seki M."/>
            <person name="Ishida J."/>
            <person name="Nakajima M."/>
            <person name="Enju A."/>
            <person name="Kamiya A."/>
            <person name="Narusaka M."/>
            <person name="Shin-i T."/>
            <person name="Nakagawa M."/>
            <person name="Sakamoto N."/>
            <person name="Oishi K."/>
            <person name="Kohara Y."/>
            <person name="Kobayashi M."/>
            <person name="Toyoda A."/>
            <person name="Sakaki Y."/>
            <person name="Sakurai T."/>
            <person name="Iida K."/>
            <person name="Akiyama K."/>
            <person name="Satou M."/>
            <person name="Toyoda T."/>
            <person name="Konagaya A."/>
            <person name="Carninci P."/>
            <person name="Kawai J."/>
            <person name="Hayashizaki Y."/>
            <person name="Shinozaki K."/>
        </authorList>
    </citation>
    <scope>NUCLEOTIDE SEQUENCE [LARGE SCALE MRNA]</scope>
    <source>
        <strain>cv. Columbia</strain>
    </source>
</reference>
<reference key="5">
    <citation type="journal article" date="2009" name="Plant Physiol.">
        <title>Large-scale Arabidopsis phosphoproteome profiling reveals novel chloroplast kinase substrates and phosphorylation networks.</title>
        <authorList>
            <person name="Reiland S."/>
            <person name="Messerli G."/>
            <person name="Baerenfaller K."/>
            <person name="Gerrits B."/>
            <person name="Endler A."/>
            <person name="Grossmann J."/>
            <person name="Gruissem W."/>
            <person name="Baginsky S."/>
        </authorList>
    </citation>
    <scope>IDENTIFICATION BY MASS SPECTROMETRY [LARGE SCALE ANALYSIS]</scope>
</reference>
<reference key="6">
    <citation type="journal article" date="2010" name="Plant Mol. Biol.">
        <title>Nuclear targeted AtS40 modulates senescence associated gene expression in Arabidopsis thaliana during natural development and in darkness.</title>
        <authorList>
            <person name="Fischer-Kilbienski I."/>
            <person name="Miao Y."/>
            <person name="Roitsch T."/>
            <person name="Zschiesche W."/>
            <person name="Humbeck K."/>
            <person name="Krupinska K."/>
        </authorList>
    </citation>
    <scope>DEVELOPMENTAL STAGE</scope>
    <scope>INDUCTION BY DARK; ABSCISIC ACID AND SALICYLIC ACID</scope>
    <scope>SUBCELLULAR LOCATION</scope>
    <scope>GENE FAMILY</scope>
    <scope>NOMENCLATURE</scope>
    <source>
        <strain>cv. Columbia</strain>
    </source>
</reference>
<keyword id="KW-0963">Cytoplasm</keyword>
<keyword id="KW-1185">Reference proteome</keyword>
<comment type="subcellular location">
    <subcellularLocation>
        <location evidence="2">Cytoplasm</location>
    </subcellularLocation>
</comment>
<comment type="developmental stage">
    <text evidence="2">Accumulates during senescence.</text>
</comment>
<comment type="induction">
    <text evidence="2">Slightly induced by dark, abscisic acid (ABA) and salicylic acid (SA).</text>
</comment>
<comment type="similarity">
    <text evidence="4">Belongs to the senescence regulator S40 family.</text>
</comment>
<gene>
    <name evidence="3" type="primary">S40-5</name>
    <name evidence="5" type="ordered locus">At1g11700</name>
    <name evidence="6" type="ORF">F25C20.15</name>
</gene>